<keyword id="KW-0217">Developmental protein</keyword>
<keyword id="KW-1015">Disulfide bond</keyword>
<keyword id="KW-0272">Extracellular matrix</keyword>
<keyword id="KW-0449">Lipoprotein</keyword>
<keyword id="KW-1185">Reference proteome</keyword>
<keyword id="KW-0964">Secreted</keyword>
<keyword id="KW-0732">Signal</keyword>
<keyword id="KW-0879">Wnt signaling pathway</keyword>
<name>WNT1_CHICK</name>
<evidence type="ECO:0000250" key="1">
    <source>
        <dbReference type="UniProtKB" id="P04628"/>
    </source>
</evidence>
<evidence type="ECO:0000250" key="2">
    <source>
        <dbReference type="UniProtKB" id="P28026"/>
    </source>
</evidence>
<evidence type="ECO:0000250" key="3">
    <source>
        <dbReference type="UniProtKB" id="P56704"/>
    </source>
</evidence>
<evidence type="ECO:0000255" key="4"/>
<evidence type="ECO:0000269" key="5">
    <source>
    </source>
</evidence>
<evidence type="ECO:0000269" key="6">
    <source>
    </source>
</evidence>
<evidence type="ECO:0000305" key="7"/>
<evidence type="ECO:0000305" key="8">
    <source>
    </source>
</evidence>
<evidence type="ECO:0000305" key="9">
    <source>
    </source>
</evidence>
<sequence length="368" mass="40797">MRGPALLLALRALCALSALRGTARAVNNSGRWWGIINVASSTNLLTDSGSVQLVLEPGLQLLSRKQRRLIRQNPGILHSVSAGLQSAVRECQWQFRNRRWNCPTSQGPNIFGKIVNRGCRETAFIFAITSAGVTHSVARSCSEGSIESCTCDYRRRGPGGPDWHWGGCSDNIDFGRLFGREFVDSSEKGRDLRFLMNLHNNEAGRMTVFSEMRQECKCHGMSGSCTVRTCWMRLPTFRAVGDVLKDRFDGASRVIYGNKGSNRASRVELHHLEPENPAHKPPSPHDLVYFEKSPNFCTYSGKMGTAGTAGRACNSSSPGLDGCELLCCGRGFRTRTQRVTERCNCTFHWCCHVSCLNCTNTQVLHECL</sequence>
<organism>
    <name type="scientific">Gallus gallus</name>
    <name type="common">Chicken</name>
    <dbReference type="NCBI Taxonomy" id="9031"/>
    <lineage>
        <taxon>Eukaryota</taxon>
        <taxon>Metazoa</taxon>
        <taxon>Chordata</taxon>
        <taxon>Craniata</taxon>
        <taxon>Vertebrata</taxon>
        <taxon>Euteleostomi</taxon>
        <taxon>Archelosauria</taxon>
        <taxon>Archosauria</taxon>
        <taxon>Dinosauria</taxon>
        <taxon>Saurischia</taxon>
        <taxon>Theropoda</taxon>
        <taxon>Coelurosauria</taxon>
        <taxon>Aves</taxon>
        <taxon>Neognathae</taxon>
        <taxon>Galloanserae</taxon>
        <taxon>Galliformes</taxon>
        <taxon>Phasianidae</taxon>
        <taxon>Phasianinae</taxon>
        <taxon>Gallus</taxon>
    </lineage>
</organism>
<protein>
    <recommendedName>
        <fullName>Protein Wnt-1</fullName>
    </recommendedName>
</protein>
<comment type="function">
    <text evidence="1 6 7">Ligand for members of the frizzled family of seven transmembrane receptors (Probable). Acts in the canonical Wnt signaling pathway by promoting beta-catenin-dependent transcriptional activation (PubMed:25451226). Developmental protein that promotes cell proliferation in the developing spinal cord (PubMed:25451226). Has a role in osteoblast function, bone development and bone homeostasis (By similarity).</text>
</comment>
<comment type="subunit">
    <text evidence="1 9">Forms a soluble 1:1 complex with AFM; this prevents oligomerization and is required for prolonged biological activity. The complex with AFM may represent the physiological form in body fluids (By similarity). Interacts with PORCN (PubMed:25451226).</text>
</comment>
<comment type="subcellular location">
    <subcellularLocation>
        <location evidence="1">Secreted</location>
        <location evidence="1">Extracellular space</location>
        <location evidence="1">Extracellular matrix</location>
    </subcellularLocation>
    <subcellularLocation>
        <location evidence="1">Secreted</location>
    </subcellularLocation>
</comment>
<comment type="developmental stage">
    <text>Expression in the met-mesencephalic region.</text>
</comment>
<comment type="PTM">
    <text evidence="6">N-glycosylated. N-glycosylation favors subsequent palmitoleoylation.</text>
</comment>
<comment type="PTM">
    <text evidence="3 8 9">Palmitoleoylation is required for efficient binding to frizzled receptors. Palmitoleoylation is necessary for proper trafficking to cell surface (Probable). Depalmitoleoylated by NOTUM, leading to inhibit Wnt signaling pathway (By similarity).</text>
</comment>
<comment type="similarity">
    <text evidence="7">Belongs to the Wnt family.</text>
</comment>
<comment type="caution">
    <text evidence="5">A palmitoylation site was proposed at Cys-91, but it was later shown that this cysteine is engaged in a disulfide bond.</text>
</comment>
<accession>Q91029</accession>
<accession>Q3L258</accession>
<accession>Q5QEB6</accession>
<accession>Q9PS91</accession>
<dbReference type="EMBL" id="KQ759375">
    <property type="status" value="NOT_ANNOTATED_CDS"/>
    <property type="molecule type" value="Genomic_DNA"/>
</dbReference>
<dbReference type="EMBL" id="X81693">
    <property type="protein sequence ID" value="CAA57341.1"/>
    <property type="molecule type" value="mRNA"/>
</dbReference>
<dbReference type="EMBL" id="AY655699">
    <property type="protein sequence ID" value="AAV67340.1"/>
    <property type="molecule type" value="mRNA"/>
</dbReference>
<dbReference type="EMBL" id="AY753286">
    <property type="protein sequence ID" value="AAW81988.1"/>
    <property type="molecule type" value="mRNA"/>
</dbReference>
<dbReference type="PIR" id="I50729">
    <property type="entry name" value="I50729"/>
</dbReference>
<dbReference type="RefSeq" id="NP_001383610.1">
    <property type="nucleotide sequence ID" value="NM_001396681.1"/>
</dbReference>
<dbReference type="RefSeq" id="XP_015128668.1">
    <property type="nucleotide sequence ID" value="XM_015273182.1"/>
</dbReference>
<dbReference type="SMR" id="Q91029"/>
<dbReference type="FunCoup" id="Q91029">
    <property type="interactions" value="91"/>
</dbReference>
<dbReference type="IntAct" id="Q91029">
    <property type="interactions" value="1"/>
</dbReference>
<dbReference type="STRING" id="9031.ENSGALP00000071904"/>
<dbReference type="Ensembl" id="ENSGALT00000047695">
    <property type="protein sequence ID" value="ENSGALP00000054099"/>
    <property type="gene ID" value="ENSGALG00000043009"/>
</dbReference>
<dbReference type="Ensembl" id="ENSGALT00010054898.1">
    <property type="protein sequence ID" value="ENSGALP00010033191.1"/>
    <property type="gene ID" value="ENSGALG00010022557.1"/>
</dbReference>
<dbReference type="GeneID" id="396160"/>
<dbReference type="KEGG" id="gga:396160"/>
<dbReference type="VEuPathDB" id="HostDB:geneid_396160"/>
<dbReference type="GeneTree" id="ENSGT00940000160329"/>
<dbReference type="InParanoid" id="Q91029"/>
<dbReference type="OMA" id="NDHMPDI"/>
<dbReference type="OrthoDB" id="5945655at2759"/>
<dbReference type="PRO" id="PR:Q91029"/>
<dbReference type="Proteomes" id="UP000000539">
    <property type="component" value="Chromosome 34"/>
</dbReference>
<dbReference type="GO" id="GO:0005576">
    <property type="term" value="C:extracellular region"/>
    <property type="evidence" value="ECO:0007669"/>
    <property type="project" value="UniProtKB-SubCell"/>
</dbReference>
<dbReference type="GO" id="GO:0005102">
    <property type="term" value="F:signaling receptor binding"/>
    <property type="evidence" value="ECO:0007669"/>
    <property type="project" value="InterPro"/>
</dbReference>
<dbReference type="GO" id="GO:0006915">
    <property type="term" value="P:apoptotic process"/>
    <property type="evidence" value="ECO:0000304"/>
    <property type="project" value="AgBase"/>
</dbReference>
<dbReference type="GO" id="GO:0030509">
    <property type="term" value="P:BMP signaling pathway"/>
    <property type="evidence" value="ECO:0000314"/>
    <property type="project" value="MGI"/>
</dbReference>
<dbReference type="GO" id="GO:0048263">
    <property type="term" value="P:determination of dorsal identity"/>
    <property type="evidence" value="ECO:0000304"/>
    <property type="project" value="AgBase"/>
</dbReference>
<dbReference type="GO" id="GO:0009953">
    <property type="term" value="P:dorsal/ventral pattern formation"/>
    <property type="evidence" value="ECO:0000304"/>
    <property type="project" value="AgBase"/>
</dbReference>
<dbReference type="GO" id="GO:0031334">
    <property type="term" value="P:positive regulation of protein-containing complex assembly"/>
    <property type="evidence" value="ECO:0000314"/>
    <property type="project" value="BHF-UCL"/>
</dbReference>
<dbReference type="GO" id="GO:0016055">
    <property type="term" value="P:Wnt signaling pathway"/>
    <property type="evidence" value="ECO:0007669"/>
    <property type="project" value="UniProtKB-KW"/>
</dbReference>
<dbReference type="CDD" id="cd19333">
    <property type="entry name" value="Wnt_Wnt1"/>
    <property type="match status" value="1"/>
</dbReference>
<dbReference type="FunFam" id="3.30.2460.20:FF:000001">
    <property type="entry name" value="Wnt homolog"/>
    <property type="match status" value="1"/>
</dbReference>
<dbReference type="Gene3D" id="3.30.2460.20">
    <property type="match status" value="1"/>
</dbReference>
<dbReference type="InterPro" id="IPR005817">
    <property type="entry name" value="Wnt"/>
</dbReference>
<dbReference type="InterPro" id="IPR009139">
    <property type="entry name" value="Wnt1"/>
</dbReference>
<dbReference type="InterPro" id="IPR043158">
    <property type="entry name" value="Wnt_C"/>
</dbReference>
<dbReference type="InterPro" id="IPR018161">
    <property type="entry name" value="Wnt_CS"/>
</dbReference>
<dbReference type="PANTHER" id="PTHR12027:SF91">
    <property type="entry name" value="PROTO-ONCOGENE WNT-1"/>
    <property type="match status" value="1"/>
</dbReference>
<dbReference type="PANTHER" id="PTHR12027">
    <property type="entry name" value="WNT RELATED"/>
    <property type="match status" value="1"/>
</dbReference>
<dbReference type="Pfam" id="PF00110">
    <property type="entry name" value="wnt"/>
    <property type="match status" value="1"/>
</dbReference>
<dbReference type="PRINTS" id="PR01841">
    <property type="entry name" value="WNT1PROTEIN"/>
</dbReference>
<dbReference type="PRINTS" id="PR01349">
    <property type="entry name" value="WNTPROTEIN"/>
</dbReference>
<dbReference type="SMART" id="SM00097">
    <property type="entry name" value="WNT1"/>
    <property type="match status" value="1"/>
</dbReference>
<dbReference type="PROSITE" id="PS00246">
    <property type="entry name" value="WNT1"/>
    <property type="match status" value="1"/>
</dbReference>
<reference key="1">
    <citation type="journal article" date="2004" name="Nature">
        <title>Sequence and comparative analysis of the chicken genome provide unique perspectives on vertebrate evolution.</title>
        <authorList>
            <person name="Hillier L.W."/>
            <person name="Miller W."/>
            <person name="Birney E."/>
            <person name="Warren W."/>
            <person name="Hardison R.C."/>
            <person name="Ponting C.P."/>
            <person name="Bork P."/>
            <person name="Burt D.W."/>
            <person name="Groenen M.A.M."/>
            <person name="Delany M.E."/>
            <person name="Dodgson J.B."/>
            <person name="Chinwalla A.T."/>
            <person name="Cliften P.F."/>
            <person name="Clifton S.W."/>
            <person name="Delehaunty K.D."/>
            <person name="Fronick C."/>
            <person name="Fulton R.S."/>
            <person name="Graves T.A."/>
            <person name="Kremitzki C."/>
            <person name="Layman D."/>
            <person name="Magrini V."/>
            <person name="McPherson J.D."/>
            <person name="Miner T.L."/>
            <person name="Minx P."/>
            <person name="Nash W.E."/>
            <person name="Nhan M.N."/>
            <person name="Nelson J.O."/>
            <person name="Oddy L.G."/>
            <person name="Pohl C.S."/>
            <person name="Randall-Maher J."/>
            <person name="Smith S.M."/>
            <person name="Wallis J.W."/>
            <person name="Yang S.-P."/>
            <person name="Romanov M.N."/>
            <person name="Rondelli C.M."/>
            <person name="Paton B."/>
            <person name="Smith J."/>
            <person name="Morrice D."/>
            <person name="Daniels L."/>
            <person name="Tempest H.G."/>
            <person name="Robertson L."/>
            <person name="Masabanda J.S."/>
            <person name="Griffin D.K."/>
            <person name="Vignal A."/>
            <person name="Fillon V."/>
            <person name="Jacobbson L."/>
            <person name="Kerje S."/>
            <person name="Andersson L."/>
            <person name="Crooijmans R.P."/>
            <person name="Aerts J."/>
            <person name="van der Poel J.J."/>
            <person name="Ellegren H."/>
            <person name="Caldwell R.B."/>
            <person name="Hubbard S.J."/>
            <person name="Grafham D.V."/>
            <person name="Kierzek A.M."/>
            <person name="McLaren S.R."/>
            <person name="Overton I.M."/>
            <person name="Arakawa H."/>
            <person name="Beattie K.J."/>
            <person name="Bezzubov Y."/>
            <person name="Boardman P.E."/>
            <person name="Bonfield J.K."/>
            <person name="Croning M.D.R."/>
            <person name="Davies R.M."/>
            <person name="Francis M.D."/>
            <person name="Humphray S.J."/>
            <person name="Scott C.E."/>
            <person name="Taylor R.G."/>
            <person name="Tickle C."/>
            <person name="Brown W.R.A."/>
            <person name="Rogers J."/>
            <person name="Buerstedde J.-M."/>
            <person name="Wilson S.A."/>
            <person name="Stubbs L."/>
            <person name="Ovcharenko I."/>
            <person name="Gordon L."/>
            <person name="Lucas S."/>
            <person name="Miller M.M."/>
            <person name="Inoko H."/>
            <person name="Shiina T."/>
            <person name="Kaufman J."/>
            <person name="Salomonsen J."/>
            <person name="Skjoedt K."/>
            <person name="Wong G.K.-S."/>
            <person name="Wang J."/>
            <person name="Liu B."/>
            <person name="Wang J."/>
            <person name="Yu J."/>
            <person name="Yang H."/>
            <person name="Nefedov M."/>
            <person name="Koriabine M."/>
            <person name="Dejong P.J."/>
            <person name="Goodstadt L."/>
            <person name="Webber C."/>
            <person name="Dickens N.J."/>
            <person name="Letunic I."/>
            <person name="Suyama M."/>
            <person name="Torrents D."/>
            <person name="von Mering C."/>
            <person name="Zdobnov E.M."/>
            <person name="Makova K."/>
            <person name="Nekrutenko A."/>
            <person name="Elnitski L."/>
            <person name="Eswara P."/>
            <person name="King D.C."/>
            <person name="Yang S.-P."/>
            <person name="Tyekucheva S."/>
            <person name="Radakrishnan A."/>
            <person name="Harris R.S."/>
            <person name="Chiaromonte F."/>
            <person name="Taylor J."/>
            <person name="He J."/>
            <person name="Rijnkels M."/>
            <person name="Griffiths-Jones S."/>
            <person name="Ureta-Vidal A."/>
            <person name="Hoffman M.M."/>
            <person name="Severin J."/>
            <person name="Searle S.M.J."/>
            <person name="Law A.S."/>
            <person name="Speed D."/>
            <person name="Waddington D."/>
            <person name="Cheng Z."/>
            <person name="Tuzun E."/>
            <person name="Eichler E."/>
            <person name="Bao Z."/>
            <person name="Flicek P."/>
            <person name="Shteynberg D.D."/>
            <person name="Brent M.R."/>
            <person name="Bye J.M."/>
            <person name="Huckle E.J."/>
            <person name="Chatterji S."/>
            <person name="Dewey C."/>
            <person name="Pachter L."/>
            <person name="Kouranov A."/>
            <person name="Mourelatos Z."/>
            <person name="Hatzigeorgiou A.G."/>
            <person name="Paterson A.H."/>
            <person name="Ivarie R."/>
            <person name="Brandstrom M."/>
            <person name="Axelsson E."/>
            <person name="Backstrom N."/>
            <person name="Berlin S."/>
            <person name="Webster M.T."/>
            <person name="Pourquie O."/>
            <person name="Reymond A."/>
            <person name="Ucla C."/>
            <person name="Antonarakis S.E."/>
            <person name="Long M."/>
            <person name="Emerson J.J."/>
            <person name="Betran E."/>
            <person name="Dupanloup I."/>
            <person name="Kaessmann H."/>
            <person name="Hinrichs A.S."/>
            <person name="Bejerano G."/>
            <person name="Furey T.S."/>
            <person name="Harte R.A."/>
            <person name="Raney B."/>
            <person name="Siepel A."/>
            <person name="Kent W.J."/>
            <person name="Haussler D."/>
            <person name="Eyras E."/>
            <person name="Castelo R."/>
            <person name="Abril J.F."/>
            <person name="Castellano S."/>
            <person name="Camara F."/>
            <person name="Parra G."/>
            <person name="Guigo R."/>
            <person name="Bourque G."/>
            <person name="Tesler G."/>
            <person name="Pevzner P.A."/>
            <person name="Smit A."/>
            <person name="Fulton L.A."/>
            <person name="Mardis E.R."/>
            <person name="Wilson R.K."/>
        </authorList>
    </citation>
    <scope>NUCLEOTIDE SEQUENCE [LARGE SCALE GENOMIC DNA]</scope>
    <source>
        <strain>Red jungle fowl</strain>
    </source>
</reference>
<reference key="2">
    <citation type="journal article" date="1994" name="Development">
        <title>Ectopic induction and reorganization of Wnt-1 expression in quail/chick chimeras.</title>
        <authorList>
            <person name="Bally-Cuif L."/>
            <person name="Wassef M."/>
        </authorList>
    </citation>
    <scope>NUCLEOTIDE SEQUENCE [MRNA] OF 32-165</scope>
    <source>
        <strain>White leghorn</strain>
        <tissue>Embryo</tissue>
    </source>
</reference>
<reference key="3">
    <citation type="submission" date="2004-06" db="EMBL/GenBank/DDBJ databases">
        <title>Phylogenetic analysis of the developmental gene wnt-1 suggests an additional gene duplication event predating the evolution of Chordates.</title>
        <authorList>
            <person name="Jensen J.L."/>
            <person name="Goode R.R."/>
            <person name="McClellan D.A."/>
            <person name="Stark M.R."/>
        </authorList>
    </citation>
    <scope>NUCLEOTIDE SEQUENCE [MRNA] OF 32-306</scope>
</reference>
<reference key="4">
    <citation type="journal article" date="1995" name="Mech. Dev.">
        <title>Wnt expression patterns in chick embryo nervous system.</title>
        <authorList>
            <person name="Hollyday M."/>
            <person name="McMahon J.A."/>
            <person name="McMahon A.P."/>
        </authorList>
    </citation>
    <scope>NUCLEOTIDE SEQUENCE [MRNA] OF 38-159</scope>
</reference>
<reference key="5">
    <citation type="journal article" date="2006" name="Dev. Dyn.">
        <title>Expression patterns of Wnt genes during development of an anterior part of the chicken eye.</title>
        <authorList>
            <person name="Fokina V.M."/>
            <person name="Frolova E.I."/>
        </authorList>
    </citation>
    <scope>NUCLEOTIDE SEQUENCE [MRNA] OF 42-361</scope>
</reference>
<reference key="6">
    <citation type="journal article" date="2011" name="PLoS ONE">
        <title>Differential palmit(e)oylation of Wnt1 on C93 and S224 residues has overlapping and distinct consequences.</title>
        <authorList>
            <person name="Galli L.M."/>
            <person name="Burrus L.W."/>
        </authorList>
    </citation>
    <scope>PRELIMINARY CYSTEINE PALMITOYLATION</scope>
    <scope>PALMITOLEOYLATION AT SER-222</scope>
    <scope>MUTAGENESIS OF CYS-91 AND SER-222</scope>
</reference>
<reference key="7">
    <citation type="journal article" date="2014" name="FEBS Lett.">
        <title>Identification of the WNT1 residues required for palmitoylation by Porcupine.</title>
        <authorList>
            <person name="Miranda M."/>
            <person name="Galli L.M."/>
            <person name="Enriquez M."/>
            <person name="Szabo L.A."/>
            <person name="Gao X."/>
            <person name="Hannoush R.N."/>
            <person name="Burrus L.W."/>
        </authorList>
    </citation>
    <scope>FUNCTION</scope>
    <scope>PALMITOLEOYLATION AT SER-222</scope>
    <scope>INTERACTION WITH PORCN</scope>
    <scope>MUTAGENESIS OF SER-222</scope>
    <scope>GLYCOSYLATION</scope>
</reference>
<gene>
    <name type="primary">WNT1</name>
    <name type="synonym">WNT-1</name>
</gene>
<proteinExistence type="evidence at protein level"/>
<feature type="signal peptide" evidence="4">
    <location>
        <begin position="1"/>
        <end position="25"/>
    </location>
</feature>
<feature type="chain" id="PRO_0000200601" description="Protein Wnt-1">
    <location>
        <begin position="26"/>
        <end position="368"/>
    </location>
</feature>
<feature type="lipid moiety-binding region" description="O-palmitoleoyl serine; by PORCN" evidence="6 8">
    <location>
        <position position="222"/>
    </location>
</feature>
<feature type="disulfide bond" evidence="2">
    <location>
        <begin position="91"/>
        <end position="102"/>
    </location>
</feature>
<feature type="disulfide bond" evidence="2">
    <location>
        <begin position="141"/>
        <end position="149"/>
    </location>
</feature>
<feature type="disulfide bond" evidence="2">
    <location>
        <begin position="151"/>
        <end position="168"/>
    </location>
</feature>
<feature type="disulfide bond" evidence="2">
    <location>
        <begin position="216"/>
        <end position="230"/>
    </location>
</feature>
<feature type="disulfide bond" evidence="2">
    <location>
        <begin position="218"/>
        <end position="225"/>
    </location>
</feature>
<feature type="disulfide bond" evidence="2">
    <location>
        <begin position="297"/>
        <end position="328"/>
    </location>
</feature>
<feature type="disulfide bond" evidence="2">
    <location>
        <begin position="313"/>
        <end position="323"/>
    </location>
</feature>
<feature type="disulfide bond" evidence="2">
    <location>
        <begin position="327"/>
        <end position="367"/>
    </location>
</feature>
<feature type="disulfide bond" evidence="2">
    <location>
        <begin position="343"/>
        <end position="358"/>
    </location>
</feature>
<feature type="disulfide bond" evidence="2">
    <location>
        <begin position="345"/>
        <end position="355"/>
    </location>
</feature>
<feature type="disulfide bond" evidence="2">
    <location>
        <begin position="350"/>
        <end position="351"/>
    </location>
</feature>
<feature type="mutagenesis site" description="Accumulates in the ER." evidence="5">
    <original>C</original>
    <variation>A</variation>
    <location>
        <position position="91"/>
    </location>
</feature>
<feature type="mutagenesis site" description="Accumulates in the ER. Loss of palmitoleoylation." evidence="5 6">
    <original>S</original>
    <variation>A</variation>
    <location>
        <position position="222"/>
    </location>
</feature>
<feature type="mutagenesis site" description="Loss of palmitoleoylation by PORCN." evidence="6">
    <original>S</original>
    <variation>C</variation>
    <location>
        <position position="222"/>
    </location>
</feature>
<feature type="mutagenesis site" description="Decreases palmitoleoylation by PORCN. No effect on the activation of the canonical Wnt signaling pathway." evidence="6">
    <original>S</original>
    <variation>T</variation>
    <location>
        <position position="222"/>
    </location>
</feature>
<feature type="sequence conflict" description="In Ref. 2; CAA57341 and 3; AAV67340." ref="2 3">
    <original>I</original>
    <variation>V</variation>
    <location>
        <position position="36"/>
    </location>
</feature>
<feature type="sequence conflict" description="In Ref. 5; AAW81988." ref="5">
    <original>C</original>
    <variation>R</variation>
    <location>
        <position position="225"/>
    </location>
</feature>